<reference key="1">
    <citation type="journal article" date="2007" name="Nature">
        <title>Evolution of genes and genomes on the Drosophila phylogeny.</title>
        <authorList>
            <consortium name="Drosophila 12 genomes consortium"/>
        </authorList>
    </citation>
    <scope>NUCLEOTIDE SEQUENCE [LARGE SCALE GENOMIC DNA]</scope>
    <source>
        <strain>Tai18E2 / Tucson 14021-0261.01</strain>
    </source>
</reference>
<gene>
    <name type="ORF">GE13868</name>
</gene>
<organism>
    <name type="scientific">Drosophila yakuba</name>
    <name type="common">Fruit fly</name>
    <dbReference type="NCBI Taxonomy" id="7245"/>
    <lineage>
        <taxon>Eukaryota</taxon>
        <taxon>Metazoa</taxon>
        <taxon>Ecdysozoa</taxon>
        <taxon>Arthropoda</taxon>
        <taxon>Hexapoda</taxon>
        <taxon>Insecta</taxon>
        <taxon>Pterygota</taxon>
        <taxon>Neoptera</taxon>
        <taxon>Endopterygota</taxon>
        <taxon>Diptera</taxon>
        <taxon>Brachycera</taxon>
        <taxon>Muscomorpha</taxon>
        <taxon>Ephydroidea</taxon>
        <taxon>Drosophilidae</taxon>
        <taxon>Drosophila</taxon>
        <taxon>Sophophora</taxon>
    </lineage>
</organism>
<keyword id="KW-0067">ATP-binding</keyword>
<keyword id="KW-0378">Hydrolase</keyword>
<keyword id="KW-0472">Membrane</keyword>
<keyword id="KW-0547">Nucleotide-binding</keyword>
<keyword id="KW-0548">Nucleotidyltransferase</keyword>
<keyword id="KW-0677">Repeat</keyword>
<keyword id="KW-0802">TPR repeat</keyword>
<keyword id="KW-0808">Transferase</keyword>
<keyword id="KW-0812">Transmembrane</keyword>
<keyword id="KW-1133">Transmembrane helix</keyword>
<evidence type="ECO:0000250" key="1">
    <source>
        <dbReference type="UniProtKB" id="A0A061I403"/>
    </source>
</evidence>
<evidence type="ECO:0000250" key="2">
    <source>
        <dbReference type="UniProtKB" id="Q8SWV6"/>
    </source>
</evidence>
<evidence type="ECO:0000250" key="3">
    <source>
        <dbReference type="UniProtKB" id="Q9BVA6"/>
    </source>
</evidence>
<evidence type="ECO:0000255" key="4"/>
<evidence type="ECO:0000255" key="5">
    <source>
        <dbReference type="PROSITE-ProRule" id="PRU00791"/>
    </source>
</evidence>
<evidence type="ECO:0000256" key="6">
    <source>
        <dbReference type="SAM" id="MobiDB-lite"/>
    </source>
</evidence>
<evidence type="ECO:0000305" key="7"/>
<sequence>MGTEAEQPSPPSPPAQQQEQTNPPLWNAQNQKPARLYRLVLFFIAGSLAAWTIHALSNSNLVWKLRQLHHLPTAHYLQTRDEFAVYSVEELNAFKEIYDKSVSDSVGASYTKDEQTSINEALVSLRMAQDMYLAGKDDKASRLFEHALALAPRHPEVLLRYGEFLEHSQRNIVLADQYYFQALTISPSNSEALANRQRTADVVQTLDERRLQSLDSKRDALSAIHESNGALRRAKKEAYFQHIYHSVGIEGNTMTLAQTRSILETRMAVDGKSIDEHNEILGMDLAMKYINASLVQKIDITIKDILELHRRVLGHVDPIEGGEFRRNQVYVGGHVPPGPGDLALLMQRFERWLNSEHSSTLHPVNYAALAHYKLVHIHPFIDGNGRTSRLLMNTLLMRAGYPPVIIPKQQRNKYYHFLKLANEGDIRPFVRFIADCTEKTLDLYLWATSDLPQQIPMLIQTESEAGERLAQMQSPNVAQRSSILEFYESGSGALP</sequence>
<dbReference type="EC" id="2.7.7.108" evidence="2"/>
<dbReference type="EC" id="3.1.4.-" evidence="1 2"/>
<dbReference type="EMBL" id="CM000157">
    <property type="protein sequence ID" value="EDW87899.1"/>
    <property type="molecule type" value="Genomic_DNA"/>
</dbReference>
<dbReference type="SMR" id="B4P0E1"/>
<dbReference type="EnsemblMetazoa" id="FBtr0260386">
    <property type="protein sequence ID" value="FBpp0258878"/>
    <property type="gene ID" value="FBgn0231514"/>
</dbReference>
<dbReference type="EnsemblMetazoa" id="XM_002088151.3">
    <property type="protein sequence ID" value="XP_002088187.1"/>
    <property type="gene ID" value="LOC6527094"/>
</dbReference>
<dbReference type="GeneID" id="6527094"/>
<dbReference type="KEGG" id="dya:Dyak_GE13868"/>
<dbReference type="CTD" id="33897"/>
<dbReference type="eggNOG" id="KOG3824">
    <property type="taxonomic scope" value="Eukaryota"/>
</dbReference>
<dbReference type="HOGENOM" id="CLU_040460_0_0_1"/>
<dbReference type="OMA" id="QLRCQLW"/>
<dbReference type="OrthoDB" id="439046at2759"/>
<dbReference type="PhylomeDB" id="B4P0E1"/>
<dbReference type="Proteomes" id="UP000002282">
    <property type="component" value="Chromosome 2L"/>
</dbReference>
<dbReference type="GO" id="GO:0005886">
    <property type="term" value="C:plasma membrane"/>
    <property type="evidence" value="ECO:0007669"/>
    <property type="project" value="EnsemblMetazoa"/>
</dbReference>
<dbReference type="GO" id="GO:0070733">
    <property type="term" value="F:AMPylase activity"/>
    <property type="evidence" value="ECO:0000250"/>
    <property type="project" value="UniProtKB"/>
</dbReference>
<dbReference type="GO" id="GO:0005524">
    <property type="term" value="F:ATP binding"/>
    <property type="evidence" value="ECO:0007669"/>
    <property type="project" value="UniProtKB-KW"/>
</dbReference>
<dbReference type="GO" id="GO:0030544">
    <property type="term" value="F:Hsp70 protein binding"/>
    <property type="evidence" value="ECO:0007669"/>
    <property type="project" value="EnsemblMetazoa"/>
</dbReference>
<dbReference type="GO" id="GO:0044603">
    <property type="term" value="F:protein adenylylhydrolase activity"/>
    <property type="evidence" value="ECO:0007669"/>
    <property type="project" value="EnsemblMetazoa"/>
</dbReference>
<dbReference type="GO" id="GO:0042803">
    <property type="term" value="F:protein homodimerization activity"/>
    <property type="evidence" value="ECO:0007669"/>
    <property type="project" value="EnsemblMetazoa"/>
</dbReference>
<dbReference type="GO" id="GO:0050908">
    <property type="term" value="P:detection of light stimulus involved in visual perception"/>
    <property type="evidence" value="ECO:0007669"/>
    <property type="project" value="EnsemblMetazoa"/>
</dbReference>
<dbReference type="GO" id="GO:0051608">
    <property type="term" value="P:histamine transport"/>
    <property type="evidence" value="ECO:0007669"/>
    <property type="project" value="EnsemblMetazoa"/>
</dbReference>
<dbReference type="GO" id="GO:0018117">
    <property type="term" value="P:protein adenylylation"/>
    <property type="evidence" value="ECO:0000250"/>
    <property type="project" value="UniProtKB"/>
</dbReference>
<dbReference type="GO" id="GO:0034976">
    <property type="term" value="P:response to endoplasmic reticulum stress"/>
    <property type="evidence" value="ECO:0007669"/>
    <property type="project" value="EnsemblMetazoa"/>
</dbReference>
<dbReference type="GO" id="GO:0007632">
    <property type="term" value="P:visual behavior"/>
    <property type="evidence" value="ECO:0007669"/>
    <property type="project" value="EnsemblMetazoa"/>
</dbReference>
<dbReference type="FunFam" id="1.10.3290.10:FF:000001">
    <property type="entry name" value="adenosine monophosphate-protein transferase FICD"/>
    <property type="match status" value="1"/>
</dbReference>
<dbReference type="FunFam" id="1.25.40.10:FF:000522">
    <property type="entry name" value="Protein adenylyltransferase Fic"/>
    <property type="match status" value="1"/>
</dbReference>
<dbReference type="Gene3D" id="1.10.3290.10">
    <property type="entry name" value="Fido-like domain"/>
    <property type="match status" value="1"/>
</dbReference>
<dbReference type="Gene3D" id="1.25.40.10">
    <property type="entry name" value="Tetratricopeptide repeat domain"/>
    <property type="match status" value="1"/>
</dbReference>
<dbReference type="InterPro" id="IPR003812">
    <property type="entry name" value="Fido"/>
</dbReference>
<dbReference type="InterPro" id="IPR036597">
    <property type="entry name" value="Fido-like_dom_sf"/>
</dbReference>
<dbReference type="InterPro" id="IPR040198">
    <property type="entry name" value="Fido_containing"/>
</dbReference>
<dbReference type="InterPro" id="IPR011990">
    <property type="entry name" value="TPR-like_helical_dom_sf"/>
</dbReference>
<dbReference type="PANTHER" id="PTHR13504">
    <property type="entry name" value="FIDO DOMAIN-CONTAINING PROTEIN DDB_G0283145"/>
    <property type="match status" value="1"/>
</dbReference>
<dbReference type="PANTHER" id="PTHR13504:SF34">
    <property type="entry name" value="PROTEIN ADENYLYLTRANSFERASE FICD"/>
    <property type="match status" value="1"/>
</dbReference>
<dbReference type="Pfam" id="PF02661">
    <property type="entry name" value="Fic"/>
    <property type="match status" value="1"/>
</dbReference>
<dbReference type="SUPFAM" id="SSF140931">
    <property type="entry name" value="Fic-like"/>
    <property type="match status" value="1"/>
</dbReference>
<dbReference type="SUPFAM" id="SSF48452">
    <property type="entry name" value="TPR-like"/>
    <property type="match status" value="1"/>
</dbReference>
<dbReference type="PROSITE" id="PS51459">
    <property type="entry name" value="FIDO"/>
    <property type="match status" value="1"/>
</dbReference>
<dbReference type="PROSITE" id="PS50293">
    <property type="entry name" value="TPR_REGION"/>
    <property type="match status" value="1"/>
</dbReference>
<protein>
    <recommendedName>
        <fullName>Protein adenylyltransferase Fic</fullName>
        <ecNumber evidence="2">2.7.7.108</ecNumber>
    </recommendedName>
    <alternativeName>
        <fullName evidence="7">De-AMPylase Fic</fullName>
        <ecNumber evidence="1 2">3.1.4.-</ecNumber>
    </alternativeName>
</protein>
<name>FICD_DROYA</name>
<comment type="function">
    <text evidence="1 2">Protein that can both mediate the addition of adenosine 5'-monophosphate (AMP) to specific residues of target proteins (AMPylation), and the removal of the same modification from target proteins (de-AMPylation), depending on the context (By similarity). The side chain of Glu-250 determines which of the two opposing activities (AMPylase or de-AMPylase) will take place (By similarity). Acts as a key regulator of the unfolded protein response (UPR) by mediating AMPylation or de-AMPylation of Hsc70-3/BiP. In unstressed cells, acts as an adenylyltransferase by mediating AMPylation of Hsc70-3/BiP at 'Thr-518', thereby inactivating it. In response to endoplasmic reticulum stress, acts as a phosphodiesterase by mediating removal of ATP (de-AMPylation) from Hsc70-3/BiP at 'Thr-518', leading to restore HSPA5/BiP activity (By similarity).</text>
</comment>
<comment type="catalytic activity">
    <reaction evidence="3">
        <text>L-tyrosyl-[protein] + ATP = O-(5'-adenylyl)-L-tyrosyl-[protein] + diphosphate</text>
        <dbReference type="Rhea" id="RHEA:54288"/>
        <dbReference type="Rhea" id="RHEA-COMP:10136"/>
        <dbReference type="Rhea" id="RHEA-COMP:13846"/>
        <dbReference type="ChEBI" id="CHEBI:30616"/>
        <dbReference type="ChEBI" id="CHEBI:33019"/>
        <dbReference type="ChEBI" id="CHEBI:46858"/>
        <dbReference type="ChEBI" id="CHEBI:83624"/>
        <dbReference type="EC" id="2.7.7.108"/>
    </reaction>
</comment>
<comment type="catalytic activity">
    <reaction evidence="2">
        <text>L-threonyl-[protein] + ATP = 3-O-(5'-adenylyl)-L-threonyl-[protein] + diphosphate</text>
        <dbReference type="Rhea" id="RHEA:54292"/>
        <dbReference type="Rhea" id="RHEA-COMP:11060"/>
        <dbReference type="Rhea" id="RHEA-COMP:13847"/>
        <dbReference type="ChEBI" id="CHEBI:30013"/>
        <dbReference type="ChEBI" id="CHEBI:30616"/>
        <dbReference type="ChEBI" id="CHEBI:33019"/>
        <dbReference type="ChEBI" id="CHEBI:138113"/>
        <dbReference type="EC" id="2.7.7.108"/>
    </reaction>
</comment>
<comment type="catalytic activity">
    <reaction evidence="2">
        <text>3-O-(5'-adenylyl)-L-threonyl-[protein] + H2O = L-threonyl-[protein] + AMP + H(+)</text>
        <dbReference type="Rhea" id="RHEA:55932"/>
        <dbReference type="Rhea" id="RHEA-COMP:11060"/>
        <dbReference type="Rhea" id="RHEA-COMP:13847"/>
        <dbReference type="ChEBI" id="CHEBI:15377"/>
        <dbReference type="ChEBI" id="CHEBI:15378"/>
        <dbReference type="ChEBI" id="CHEBI:30013"/>
        <dbReference type="ChEBI" id="CHEBI:138113"/>
        <dbReference type="ChEBI" id="CHEBI:456215"/>
    </reaction>
</comment>
<comment type="activity regulation">
    <text evidence="1 3">The side chain of Glu-250 determines which of the two opposing activities (AMPylase or de-AMPylase) will take place. In response to endoplasmic reticulum stress, mediates de-AMPylase activity (By similarity). Adenylyltransferase activity is inhibited by the inhibitory helix present at the N-terminus: Glu-250 binds ATP and competes with ATP-binding at Arg-389, thereby preventing adenylyltransferase activity (By similarity). In unstressed cells, disengagement of Glu-250 promotes adenylyltransferase activity (By similarity). Activation dissociates ATP-binding from Glu-250, allowing ordered binding of the entire ATP moiety with the alpha-phosphate in an orientation that is productive for accepting an incoming target hydroxyl side chain (By similarity).</text>
</comment>
<comment type="subunit">
    <text evidence="2">Homodimer.</text>
</comment>
<comment type="subcellular location">
    <subcellularLocation>
        <location evidence="2">Membrane</location>
        <topology evidence="2">Single-pass membrane protein</topology>
    </subcellularLocation>
</comment>
<comment type="domain">
    <text evidence="3">The fido domain mediates the adenylyltransferase activity.</text>
</comment>
<comment type="similarity">
    <text evidence="7">Belongs to the fic family.</text>
</comment>
<accession>B4P0E1</accession>
<proteinExistence type="inferred from homology"/>
<feature type="chain" id="PRO_0000381793" description="Protein adenylyltransferase Fic">
    <location>
        <begin position="1"/>
        <end position="495"/>
    </location>
</feature>
<feature type="transmembrane region" description="Helical" evidence="4">
    <location>
        <begin position="36"/>
        <end position="55"/>
    </location>
</feature>
<feature type="repeat" description="TPR 1">
    <location>
        <begin position="121"/>
        <end position="154"/>
    </location>
</feature>
<feature type="repeat" description="TPR 2">
    <location>
        <begin position="155"/>
        <end position="189"/>
    </location>
</feature>
<feature type="domain" description="Fido" evidence="5">
    <location>
        <begin position="300"/>
        <end position="435"/>
    </location>
</feature>
<feature type="region of interest" description="Disordered" evidence="6">
    <location>
        <begin position="1"/>
        <end position="27"/>
    </location>
</feature>
<feature type="short sequence motif" description="Inhibitory (S/T)XXXE(G/N) motif">
    <location>
        <begin position="246"/>
        <end position="251"/>
    </location>
</feature>
<feature type="active site" evidence="1">
    <location>
        <position position="378"/>
    </location>
</feature>
<feature type="binding site" evidence="3">
    <location>
        <position position="250"/>
    </location>
    <ligand>
        <name>ATP</name>
        <dbReference type="ChEBI" id="CHEBI:30616"/>
    </ligand>
</feature>
<feature type="binding site" evidence="3">
    <location>
        <begin position="331"/>
        <end position="334"/>
    </location>
    <ligand>
        <name>ATP</name>
        <dbReference type="ChEBI" id="CHEBI:30616"/>
    </ligand>
</feature>
<feature type="binding site" evidence="3">
    <location>
        <begin position="382"/>
        <end position="389"/>
    </location>
    <ligand>
        <name>ATP</name>
        <dbReference type="ChEBI" id="CHEBI:30616"/>
    </ligand>
</feature>
<feature type="binding site" evidence="3">
    <location>
        <begin position="414"/>
        <end position="415"/>
    </location>
    <ligand>
        <name>ATP</name>
        <dbReference type="ChEBI" id="CHEBI:30616"/>
    </ligand>
</feature>
<feature type="binding site" evidence="3">
    <location>
        <position position="422"/>
    </location>
    <ligand>
        <name>ATP</name>
        <dbReference type="ChEBI" id="CHEBI:30616"/>
    </ligand>
</feature>
<feature type="site" description="Important for autoinhibition of adenylyltransferase activity" evidence="3">
    <location>
        <position position="250"/>
    </location>
</feature>